<name>PUF3_SCHPO</name>
<organism>
    <name type="scientific">Schizosaccharomyces pombe (strain 972 / ATCC 24843)</name>
    <name type="common">Fission yeast</name>
    <dbReference type="NCBI Taxonomy" id="284812"/>
    <lineage>
        <taxon>Eukaryota</taxon>
        <taxon>Fungi</taxon>
        <taxon>Dikarya</taxon>
        <taxon>Ascomycota</taxon>
        <taxon>Taphrinomycotina</taxon>
        <taxon>Schizosaccharomycetes</taxon>
        <taxon>Schizosaccharomycetales</taxon>
        <taxon>Schizosaccharomycetaceae</taxon>
        <taxon>Schizosaccharomyces</taxon>
    </lineage>
</organism>
<comment type="function">
    <text evidence="1">RNA-binding protein involved in post-transcriptional regulation. Predominantly binds to mRNAs encoding mitochondrial proteins and localizes them to the vicinity of mitochondria for translation. Regulates mitochondrial biogenesis, motility and morphology (By similarity).</text>
</comment>
<comment type="subcellular location">
    <subcellularLocation>
        <location evidence="1">Mitochondrion outer membrane</location>
        <topology evidence="1">Peripheral membrane protein</topology>
        <orientation evidence="1">Cytoplasmic side</orientation>
    </subcellularLocation>
    <subcellularLocation>
        <location evidence="5">Cytoplasm</location>
    </subcellularLocation>
    <text evidence="1">Localizes to multiple discrete foci in the cytoplasm.</text>
</comment>
<comment type="induction">
    <text evidence="4">By stress.</text>
</comment>
<comment type="miscellaneous">
    <text>Present with 846 molecules/cell in log phase SD medium.</text>
</comment>
<comment type="similarity">
    <text evidence="6">Belongs to the PUF3 family.</text>
</comment>
<proteinExistence type="evidence at transcript level"/>
<dbReference type="EMBL" id="CU329670">
    <property type="protein sequence ID" value="CAA22616.2"/>
    <property type="molecule type" value="Genomic_DNA"/>
</dbReference>
<dbReference type="RefSeq" id="NP_593141.2">
    <property type="nucleotide sequence ID" value="NM_001018537.3"/>
</dbReference>
<dbReference type="SMR" id="O94462"/>
<dbReference type="BioGRID" id="278767">
    <property type="interactions" value="49"/>
</dbReference>
<dbReference type="FunCoup" id="O94462">
    <property type="interactions" value="421"/>
</dbReference>
<dbReference type="STRING" id="284812.O94462"/>
<dbReference type="iPTMnet" id="O94462"/>
<dbReference type="PaxDb" id="4896-SPAC1687.22c.1"/>
<dbReference type="EnsemblFungi" id="SPAC1687.22c.1">
    <property type="protein sequence ID" value="SPAC1687.22c.1:pep"/>
    <property type="gene ID" value="SPAC1687.22c"/>
</dbReference>
<dbReference type="GeneID" id="2542300"/>
<dbReference type="KEGG" id="spo:2542300"/>
<dbReference type="PomBase" id="SPAC1687.22c">
    <property type="gene designation" value="puf3"/>
</dbReference>
<dbReference type="VEuPathDB" id="FungiDB:SPAC1687.22c"/>
<dbReference type="eggNOG" id="KOG1488">
    <property type="taxonomic scope" value="Eukaryota"/>
</dbReference>
<dbReference type="HOGENOM" id="CLU_386441_0_0_1"/>
<dbReference type="InParanoid" id="O94462"/>
<dbReference type="OMA" id="ILMLMMK"/>
<dbReference type="PhylomeDB" id="O94462"/>
<dbReference type="PRO" id="PR:O94462"/>
<dbReference type="Proteomes" id="UP000002485">
    <property type="component" value="Chromosome I"/>
</dbReference>
<dbReference type="GO" id="GO:0005737">
    <property type="term" value="C:cytoplasm"/>
    <property type="evidence" value="ECO:0000318"/>
    <property type="project" value="GO_Central"/>
</dbReference>
<dbReference type="GO" id="GO:0010494">
    <property type="term" value="C:cytoplasmic stress granule"/>
    <property type="evidence" value="ECO:0000269"/>
    <property type="project" value="PomBase"/>
</dbReference>
<dbReference type="GO" id="GO:0005829">
    <property type="term" value="C:cytosol"/>
    <property type="evidence" value="ECO:0007005"/>
    <property type="project" value="PomBase"/>
</dbReference>
<dbReference type="GO" id="GO:0005741">
    <property type="term" value="C:mitochondrial outer membrane"/>
    <property type="evidence" value="ECO:0007669"/>
    <property type="project" value="UniProtKB-SubCell"/>
</dbReference>
<dbReference type="GO" id="GO:0000932">
    <property type="term" value="C:P-body"/>
    <property type="evidence" value="ECO:0000269"/>
    <property type="project" value="PomBase"/>
</dbReference>
<dbReference type="GO" id="GO:1905762">
    <property type="term" value="F:CCR4-NOT complex binding"/>
    <property type="evidence" value="ECO:0000314"/>
    <property type="project" value="PomBase"/>
</dbReference>
<dbReference type="GO" id="GO:0044692">
    <property type="term" value="F:exoribonuclease activator activity"/>
    <property type="evidence" value="ECO:0000314"/>
    <property type="project" value="PomBase"/>
</dbReference>
<dbReference type="GO" id="GO:0003730">
    <property type="term" value="F:mRNA 3'-UTR binding"/>
    <property type="evidence" value="ECO:0000318"/>
    <property type="project" value="GO_Central"/>
</dbReference>
<dbReference type="GO" id="GO:0000288">
    <property type="term" value="P:nuclear-transcribed mRNA catabolic process, deadenylation-dependent decay"/>
    <property type="evidence" value="ECO:0000318"/>
    <property type="project" value="GO_Central"/>
</dbReference>
<dbReference type="GO" id="GO:0060213">
    <property type="term" value="P:positive regulation of nuclear-transcribed mRNA poly(A) tail shortening"/>
    <property type="evidence" value="ECO:0000314"/>
    <property type="project" value="PomBase"/>
</dbReference>
<dbReference type="CDD" id="cd07920">
    <property type="entry name" value="Pumilio"/>
    <property type="match status" value="1"/>
</dbReference>
<dbReference type="FunFam" id="1.25.10.10:FF:000004">
    <property type="entry name" value="Pumilio homolog 1 isoform 2"/>
    <property type="match status" value="1"/>
</dbReference>
<dbReference type="Gene3D" id="1.25.10.10">
    <property type="entry name" value="Leucine-rich Repeat Variant"/>
    <property type="match status" value="1"/>
</dbReference>
<dbReference type="InterPro" id="IPR011989">
    <property type="entry name" value="ARM-like"/>
</dbReference>
<dbReference type="InterPro" id="IPR016024">
    <property type="entry name" value="ARM-type_fold"/>
</dbReference>
<dbReference type="InterPro" id="IPR033133">
    <property type="entry name" value="PUM-HD"/>
</dbReference>
<dbReference type="InterPro" id="IPR033712">
    <property type="entry name" value="Pumilio_RNA-bd"/>
</dbReference>
<dbReference type="InterPro" id="IPR001313">
    <property type="entry name" value="Pumilio_RNA-bd_rpt"/>
</dbReference>
<dbReference type="PANTHER" id="PTHR12537:SF12">
    <property type="entry name" value="MATERNAL PROTEIN PUMILIO"/>
    <property type="match status" value="1"/>
</dbReference>
<dbReference type="PANTHER" id="PTHR12537">
    <property type="entry name" value="RNA BINDING PROTEIN PUMILIO-RELATED"/>
    <property type="match status" value="1"/>
</dbReference>
<dbReference type="Pfam" id="PF00806">
    <property type="entry name" value="PUF"/>
    <property type="match status" value="8"/>
</dbReference>
<dbReference type="SMART" id="SM00025">
    <property type="entry name" value="Pumilio"/>
    <property type="match status" value="8"/>
</dbReference>
<dbReference type="SUPFAM" id="SSF48371">
    <property type="entry name" value="ARM repeat"/>
    <property type="match status" value="1"/>
</dbReference>
<dbReference type="PROSITE" id="PS50302">
    <property type="entry name" value="PUM"/>
    <property type="match status" value="8"/>
</dbReference>
<dbReference type="PROSITE" id="PS50303">
    <property type="entry name" value="PUM_HD"/>
    <property type="match status" value="1"/>
</dbReference>
<sequence length="732" mass="81069">MFTAVNSNPNASESISGNSAFNFPSAPVSSLDTNNYGQRRPSLLSGTSPTSSFFNSSMISSNYTFPHGSNKQASLESPVSYSNPIPSLTWLSLDGDSPDSLVSTPTAPSANHHGNPFPNGKQSIKAMPSLVNLQEDSVISKFPNSLEVPFRKRSESTSSSLSGLHSDLRPLKTELYGQLNSECGARFPQTLKSPLTPIGGDSARTVSASTARTSDKFFPRHTRAHSDFWIPATSKPSRHASHSSIGDLTTITQSSISSGSGSFKPSWDGSFDSSLMAHQSYGTSPAFANGNSPTLKNDSSFFGSASVRPTVSPIGTSFRQSLPDISAFGIPKTETNPSEVVAPGTIPISVLPTSNFSAATPANPSLINQNGQEFLQQSRVLYLFHANKQRHFELSDILGNVVLFSTDQHGSRFIQQKLATATEEEREAVFQEIASTSCLQLMMDIFGNYVVQKYFEFGNEKQKQILLSQIKGHVFSLSLQMYGCRVVQKAIEYISPEHQVQLIQELDGHVLDCVCDQNGNHVIQKAIECIDTGHLQFILRALRPQIHVLSAHPYGCRVIQRAIEHCHSERKLIIEELLPHILKLTQDQYGNYVVQHILRTGSESDKKYIFDLMIDHLLFLSCHKFASNVVERCISYISDVDRRRILNKIISEKAENCSILMLMMKDKYANYVIQKLLDASPEEERDLLISYIYPHISVLKKFTYGKHLIMSVERFRQKSISAVPKLASKECK</sequence>
<protein>
    <recommendedName>
        <fullName>mRNA-binding protein puf3</fullName>
    </recommendedName>
    <alternativeName>
        <fullName>Pumilio homology domain family member 3</fullName>
    </alternativeName>
</protein>
<reference key="1">
    <citation type="journal article" date="2002" name="Nature">
        <title>The genome sequence of Schizosaccharomyces pombe.</title>
        <authorList>
            <person name="Wood V."/>
            <person name="Gwilliam R."/>
            <person name="Rajandream M.A."/>
            <person name="Lyne M.H."/>
            <person name="Lyne R."/>
            <person name="Stewart A."/>
            <person name="Sgouros J.G."/>
            <person name="Peat N."/>
            <person name="Hayles J."/>
            <person name="Baker S.G."/>
            <person name="Basham D."/>
            <person name="Bowman S."/>
            <person name="Brooks K."/>
            <person name="Brown D."/>
            <person name="Brown S."/>
            <person name="Chillingworth T."/>
            <person name="Churcher C.M."/>
            <person name="Collins M."/>
            <person name="Connor R."/>
            <person name="Cronin A."/>
            <person name="Davis P."/>
            <person name="Feltwell T."/>
            <person name="Fraser A."/>
            <person name="Gentles S."/>
            <person name="Goble A."/>
            <person name="Hamlin N."/>
            <person name="Harris D.E."/>
            <person name="Hidalgo J."/>
            <person name="Hodgson G."/>
            <person name="Holroyd S."/>
            <person name="Hornsby T."/>
            <person name="Howarth S."/>
            <person name="Huckle E.J."/>
            <person name="Hunt S."/>
            <person name="Jagels K."/>
            <person name="James K.D."/>
            <person name="Jones L."/>
            <person name="Jones M."/>
            <person name="Leather S."/>
            <person name="McDonald S."/>
            <person name="McLean J."/>
            <person name="Mooney P."/>
            <person name="Moule S."/>
            <person name="Mungall K.L."/>
            <person name="Murphy L.D."/>
            <person name="Niblett D."/>
            <person name="Odell C."/>
            <person name="Oliver K."/>
            <person name="O'Neil S."/>
            <person name="Pearson D."/>
            <person name="Quail M.A."/>
            <person name="Rabbinowitsch E."/>
            <person name="Rutherford K.M."/>
            <person name="Rutter S."/>
            <person name="Saunders D."/>
            <person name="Seeger K."/>
            <person name="Sharp S."/>
            <person name="Skelton J."/>
            <person name="Simmonds M.N."/>
            <person name="Squares R."/>
            <person name="Squares S."/>
            <person name="Stevens K."/>
            <person name="Taylor K."/>
            <person name="Taylor R.G."/>
            <person name="Tivey A."/>
            <person name="Walsh S.V."/>
            <person name="Warren T."/>
            <person name="Whitehead S."/>
            <person name="Woodward J.R."/>
            <person name="Volckaert G."/>
            <person name="Aert R."/>
            <person name="Robben J."/>
            <person name="Grymonprez B."/>
            <person name="Weltjens I."/>
            <person name="Vanstreels E."/>
            <person name="Rieger M."/>
            <person name="Schaefer M."/>
            <person name="Mueller-Auer S."/>
            <person name="Gabel C."/>
            <person name="Fuchs M."/>
            <person name="Duesterhoeft A."/>
            <person name="Fritzc C."/>
            <person name="Holzer E."/>
            <person name="Moestl D."/>
            <person name="Hilbert H."/>
            <person name="Borzym K."/>
            <person name="Langer I."/>
            <person name="Beck A."/>
            <person name="Lehrach H."/>
            <person name="Reinhardt R."/>
            <person name="Pohl T.M."/>
            <person name="Eger P."/>
            <person name="Zimmermann W."/>
            <person name="Wedler H."/>
            <person name="Wambutt R."/>
            <person name="Purnelle B."/>
            <person name="Goffeau A."/>
            <person name="Cadieu E."/>
            <person name="Dreano S."/>
            <person name="Gloux S."/>
            <person name="Lelaure V."/>
            <person name="Mottier S."/>
            <person name="Galibert F."/>
            <person name="Aves S.J."/>
            <person name="Xiang Z."/>
            <person name="Hunt C."/>
            <person name="Moore K."/>
            <person name="Hurst S.M."/>
            <person name="Lucas M."/>
            <person name="Rochet M."/>
            <person name="Gaillardin C."/>
            <person name="Tallada V.A."/>
            <person name="Garzon A."/>
            <person name="Thode G."/>
            <person name="Daga R.R."/>
            <person name="Cruzado L."/>
            <person name="Jimenez J."/>
            <person name="Sanchez M."/>
            <person name="del Rey F."/>
            <person name="Benito J."/>
            <person name="Dominguez A."/>
            <person name="Revuelta J.L."/>
            <person name="Moreno S."/>
            <person name="Armstrong J."/>
            <person name="Forsburg S.L."/>
            <person name="Cerutti L."/>
            <person name="Lowe T."/>
            <person name="McCombie W.R."/>
            <person name="Paulsen I."/>
            <person name="Potashkin J."/>
            <person name="Shpakovski G.V."/>
            <person name="Ussery D."/>
            <person name="Barrell B.G."/>
            <person name="Nurse P."/>
        </authorList>
    </citation>
    <scope>NUCLEOTIDE SEQUENCE [LARGE SCALE GENOMIC DNA]</scope>
    <source>
        <strain>972 / ATCC 24843</strain>
    </source>
</reference>
<reference key="2">
    <citation type="journal article" date="2003" name="Mol. Biol. Cell">
        <title>Global transcriptional responses of fission yeast to environmental stress.</title>
        <authorList>
            <person name="Chen D."/>
            <person name="Toone W.M."/>
            <person name="Mata J."/>
            <person name="Lyne R."/>
            <person name="Burns G."/>
            <person name="Kivinen K."/>
            <person name="Brazma A."/>
            <person name="Jones N."/>
            <person name="Baehler J."/>
        </authorList>
    </citation>
    <scope>INDUCTION</scope>
</reference>
<reference key="3">
    <citation type="journal article" date="2006" name="Nat. Biotechnol.">
        <title>ORFeome cloning and global analysis of protein localization in the fission yeast Schizosaccharomyces pombe.</title>
        <authorList>
            <person name="Matsuyama A."/>
            <person name="Arai R."/>
            <person name="Yashiroda Y."/>
            <person name="Shirai A."/>
            <person name="Kamata A."/>
            <person name="Sekido S."/>
            <person name="Kobayashi Y."/>
            <person name="Hashimoto A."/>
            <person name="Hamamoto M."/>
            <person name="Hiraoka Y."/>
            <person name="Horinouchi S."/>
            <person name="Yoshida M."/>
        </authorList>
    </citation>
    <scope>SUBCELLULAR LOCATION [LARGE SCALE ANALYSIS]</scope>
</reference>
<keyword id="KW-0963">Cytoplasm</keyword>
<keyword id="KW-0472">Membrane</keyword>
<keyword id="KW-0496">Mitochondrion</keyword>
<keyword id="KW-1000">Mitochondrion outer membrane</keyword>
<keyword id="KW-1185">Reference proteome</keyword>
<keyword id="KW-0677">Repeat</keyword>
<keyword id="KW-0694">RNA-binding</keyword>
<accession>O94462</accession>
<gene>
    <name type="primary">puf3</name>
    <name type="ORF">SPAC1687.22c</name>
</gene>
<evidence type="ECO:0000250" key="1"/>
<evidence type="ECO:0000255" key="2">
    <source>
        <dbReference type="PROSITE-ProRule" id="PRU00318"/>
    </source>
</evidence>
<evidence type="ECO:0000256" key="3">
    <source>
        <dbReference type="SAM" id="MobiDB-lite"/>
    </source>
</evidence>
<evidence type="ECO:0000269" key="4">
    <source>
    </source>
</evidence>
<evidence type="ECO:0000269" key="5">
    <source>
    </source>
</evidence>
<evidence type="ECO:0000305" key="6"/>
<feature type="chain" id="PRO_0000372691" description="mRNA-binding protein puf3">
    <location>
        <begin position="1"/>
        <end position="732"/>
    </location>
</feature>
<feature type="domain" description="PUM-HD" evidence="2">
    <location>
        <begin position="376"/>
        <end position="716"/>
    </location>
</feature>
<feature type="repeat" description="Pumilio 1">
    <location>
        <begin position="396"/>
        <end position="431"/>
    </location>
</feature>
<feature type="repeat" description="Pumilio 2">
    <location>
        <begin position="432"/>
        <end position="468"/>
    </location>
</feature>
<feature type="repeat" description="Pumilio 3">
    <location>
        <begin position="469"/>
        <end position="504"/>
    </location>
</feature>
<feature type="repeat" description="Pumilio 4">
    <location>
        <begin position="505"/>
        <end position="540"/>
    </location>
</feature>
<feature type="repeat" description="Pumilio 5">
    <location>
        <begin position="541"/>
        <end position="576"/>
    </location>
</feature>
<feature type="repeat" description="Pumilio 6">
    <location>
        <begin position="577"/>
        <end position="611"/>
    </location>
</feature>
<feature type="repeat" description="Pumilio 7">
    <location>
        <begin position="612"/>
        <end position="647"/>
    </location>
</feature>
<feature type="repeat" description="Pumilio 8">
    <location>
        <begin position="655"/>
        <end position="690"/>
    </location>
</feature>
<feature type="region of interest" description="Disordered" evidence="3">
    <location>
        <begin position="98"/>
        <end position="123"/>
    </location>
</feature>
<feature type="compositionally biased region" description="Polar residues" evidence="3">
    <location>
        <begin position="100"/>
        <end position="109"/>
    </location>
</feature>